<protein>
    <recommendedName>
        <fullName evidence="1">Phosphoenolpyruvate carboxylase</fullName>
        <shortName evidence="1">PEPC</shortName>
        <shortName evidence="1">PEPCase</shortName>
        <ecNumber evidence="1">4.1.1.31</ecNumber>
    </recommendedName>
</protein>
<gene>
    <name evidence="1" type="primary">ppc</name>
    <name type="ordered locus">Rcas_2377</name>
</gene>
<feature type="chain" id="PRO_1000082431" description="Phosphoenolpyruvate carboxylase">
    <location>
        <begin position="1"/>
        <end position="938"/>
    </location>
</feature>
<feature type="active site" evidence="1">
    <location>
        <position position="151"/>
    </location>
</feature>
<feature type="active site" evidence="1">
    <location>
        <position position="591"/>
    </location>
</feature>
<dbReference type="EC" id="4.1.1.31" evidence="1"/>
<dbReference type="EMBL" id="CP000804">
    <property type="protein sequence ID" value="ABU58459.1"/>
    <property type="molecule type" value="Genomic_DNA"/>
</dbReference>
<dbReference type="RefSeq" id="WP_012120883.1">
    <property type="nucleotide sequence ID" value="NC_009767.1"/>
</dbReference>
<dbReference type="SMR" id="A7NLR3"/>
<dbReference type="STRING" id="383372.Rcas_2377"/>
<dbReference type="KEGG" id="rca:Rcas_2377"/>
<dbReference type="eggNOG" id="COG2352">
    <property type="taxonomic scope" value="Bacteria"/>
</dbReference>
<dbReference type="HOGENOM" id="CLU_006557_2_0_0"/>
<dbReference type="OrthoDB" id="9768133at2"/>
<dbReference type="Proteomes" id="UP000000263">
    <property type="component" value="Chromosome"/>
</dbReference>
<dbReference type="GO" id="GO:0005829">
    <property type="term" value="C:cytosol"/>
    <property type="evidence" value="ECO:0007669"/>
    <property type="project" value="TreeGrafter"/>
</dbReference>
<dbReference type="GO" id="GO:0000287">
    <property type="term" value="F:magnesium ion binding"/>
    <property type="evidence" value="ECO:0007669"/>
    <property type="project" value="UniProtKB-UniRule"/>
</dbReference>
<dbReference type="GO" id="GO:0008964">
    <property type="term" value="F:phosphoenolpyruvate carboxylase activity"/>
    <property type="evidence" value="ECO:0007669"/>
    <property type="project" value="UniProtKB-UniRule"/>
</dbReference>
<dbReference type="GO" id="GO:0015977">
    <property type="term" value="P:carbon fixation"/>
    <property type="evidence" value="ECO:0007669"/>
    <property type="project" value="UniProtKB-UniRule"/>
</dbReference>
<dbReference type="GO" id="GO:0006107">
    <property type="term" value="P:oxaloacetate metabolic process"/>
    <property type="evidence" value="ECO:0007669"/>
    <property type="project" value="UniProtKB-UniRule"/>
</dbReference>
<dbReference type="GO" id="GO:0006099">
    <property type="term" value="P:tricarboxylic acid cycle"/>
    <property type="evidence" value="ECO:0007669"/>
    <property type="project" value="InterPro"/>
</dbReference>
<dbReference type="Gene3D" id="1.20.1440.90">
    <property type="entry name" value="Phosphoenolpyruvate/pyruvate domain"/>
    <property type="match status" value="1"/>
</dbReference>
<dbReference type="HAMAP" id="MF_00595">
    <property type="entry name" value="PEPcase_type1"/>
    <property type="match status" value="1"/>
</dbReference>
<dbReference type="InterPro" id="IPR021135">
    <property type="entry name" value="PEP_COase"/>
</dbReference>
<dbReference type="InterPro" id="IPR022805">
    <property type="entry name" value="PEP_COase_bac/pln-type"/>
</dbReference>
<dbReference type="InterPro" id="IPR018129">
    <property type="entry name" value="PEP_COase_Lys_AS"/>
</dbReference>
<dbReference type="InterPro" id="IPR015813">
    <property type="entry name" value="Pyrv/PenolPyrv_kinase-like_dom"/>
</dbReference>
<dbReference type="NCBIfam" id="NF000584">
    <property type="entry name" value="PRK00009.1"/>
    <property type="match status" value="1"/>
</dbReference>
<dbReference type="PANTHER" id="PTHR30523">
    <property type="entry name" value="PHOSPHOENOLPYRUVATE CARBOXYLASE"/>
    <property type="match status" value="1"/>
</dbReference>
<dbReference type="PANTHER" id="PTHR30523:SF6">
    <property type="entry name" value="PHOSPHOENOLPYRUVATE CARBOXYLASE"/>
    <property type="match status" value="1"/>
</dbReference>
<dbReference type="Pfam" id="PF00311">
    <property type="entry name" value="PEPcase"/>
    <property type="match status" value="1"/>
</dbReference>
<dbReference type="PRINTS" id="PR00150">
    <property type="entry name" value="PEPCARBXLASE"/>
</dbReference>
<dbReference type="SUPFAM" id="SSF51621">
    <property type="entry name" value="Phosphoenolpyruvate/pyruvate domain"/>
    <property type="match status" value="1"/>
</dbReference>
<dbReference type="PROSITE" id="PS00781">
    <property type="entry name" value="PEPCASE_1"/>
    <property type="match status" value="1"/>
</dbReference>
<proteinExistence type="inferred from homology"/>
<organism>
    <name type="scientific">Roseiflexus castenholzii (strain DSM 13941 / HLO8)</name>
    <dbReference type="NCBI Taxonomy" id="383372"/>
    <lineage>
        <taxon>Bacteria</taxon>
        <taxon>Bacillati</taxon>
        <taxon>Chloroflexota</taxon>
        <taxon>Chloroflexia</taxon>
        <taxon>Chloroflexales</taxon>
        <taxon>Roseiflexineae</taxon>
        <taxon>Roseiflexaceae</taxon>
        <taxon>Roseiflexus</taxon>
    </lineage>
</organism>
<name>CAPP_ROSCS</name>
<evidence type="ECO:0000255" key="1">
    <source>
        <dbReference type="HAMAP-Rule" id="MF_00595"/>
    </source>
</evidence>
<sequence>MSHTPHNRRHESERLSATIRFLGNLLGDVIREQAGEAAFQLVERLRTLGKELRNGAPDRADAELRMMAARMTVADIQIVIKAFNAYFLLVNLAEQMQRVWVLRDRERKYPDTPRPESIAAAIAELHACGIPATTIQEWLDTACIQPVFTAHPTEARRRTALEKVRRLATLLDERTGDLHGFVREENTMRIREEIVSLWQTDEVRVVKPTVIDEVKNGMFYFESGLFDLIPRLYRELEYALRTTYPTHEWRVPPLLRYGAWMGGDRDGNPNVTHTVTIQAVRMMRAAAIERHIAAVEELSHRLGQSVRQAPVSDELRESLAHDASLFPEVADMLARRNPYELYRQKCTYIREKLIRTLDYARTASLDWGRSDSPPKGAYFSRTDLLDDLHVMERSLLSNNAAIVANGALRDLIRQAEVFGLHTATLDIRQHSERHTAALAEVLAAAGVCADYTALNEIERIELLSREIENPRPLIPTRLDYSPDTVEVIATFRAVASILERLSPEAVETCIVSMTRGASDLLAPLLLAKEAGLFRPFRFSRLSMAPLFETGADLACCDEVLEACMRLPIYRNHLALRGFVQEVMIGYSDSNKDVGYAAANWAIYQAQRKLRDFGRRHGIQMRLFHGRGGAIGRGGGPANHAILAQPPGSIGNQIKITEQGEVIADRYGLPLLAHRHIEQVINAVLRAGLLQRDDPPDEWTQALERLAALSQRHYRALVYERSDFVPYFRNVTPIAEISRLNIGSRPASRRNTERIEDLRAIPWVFSWMQSRHTLPGWYGLGFALETFVYAGEQSDASGSAIDRLALLQEMYARWSFFRVMIDNAQMILGKADLHIASRYAELAPDQNAAAAIFAAIREEYQRASRMIRQVARIERLLDNAPVLQHSIQRRNPYIDPMSYLQIELLRRLRAAPDGPDHAAIEDAILLSISGLAAGLMNTG</sequence>
<accession>A7NLR3</accession>
<keyword id="KW-0120">Carbon dioxide fixation</keyword>
<keyword id="KW-0456">Lyase</keyword>
<keyword id="KW-0460">Magnesium</keyword>
<keyword id="KW-1185">Reference proteome</keyword>
<reference key="1">
    <citation type="submission" date="2007-08" db="EMBL/GenBank/DDBJ databases">
        <title>Complete sequence of Roseiflexus castenholzii DSM 13941.</title>
        <authorList>
            <consortium name="US DOE Joint Genome Institute"/>
            <person name="Copeland A."/>
            <person name="Lucas S."/>
            <person name="Lapidus A."/>
            <person name="Barry K."/>
            <person name="Glavina del Rio T."/>
            <person name="Dalin E."/>
            <person name="Tice H."/>
            <person name="Pitluck S."/>
            <person name="Thompson L.S."/>
            <person name="Brettin T."/>
            <person name="Bruce D."/>
            <person name="Detter J.C."/>
            <person name="Han C."/>
            <person name="Tapia R."/>
            <person name="Schmutz J."/>
            <person name="Larimer F."/>
            <person name="Land M."/>
            <person name="Hauser L."/>
            <person name="Kyrpides N."/>
            <person name="Mikhailova N."/>
            <person name="Bryant D.A."/>
            <person name="Hanada S."/>
            <person name="Tsukatani Y."/>
            <person name="Richardson P."/>
        </authorList>
    </citation>
    <scope>NUCLEOTIDE SEQUENCE [LARGE SCALE GENOMIC DNA]</scope>
    <source>
        <strain>DSM 13941 / HLO8</strain>
    </source>
</reference>
<comment type="function">
    <text evidence="1">Forms oxaloacetate, a four-carbon dicarboxylic acid source for the tricarboxylic acid cycle.</text>
</comment>
<comment type="catalytic activity">
    <reaction evidence="1">
        <text>oxaloacetate + phosphate = phosphoenolpyruvate + hydrogencarbonate</text>
        <dbReference type="Rhea" id="RHEA:28370"/>
        <dbReference type="ChEBI" id="CHEBI:16452"/>
        <dbReference type="ChEBI" id="CHEBI:17544"/>
        <dbReference type="ChEBI" id="CHEBI:43474"/>
        <dbReference type="ChEBI" id="CHEBI:58702"/>
        <dbReference type="EC" id="4.1.1.31"/>
    </reaction>
</comment>
<comment type="cofactor">
    <cofactor evidence="1">
        <name>Mg(2+)</name>
        <dbReference type="ChEBI" id="CHEBI:18420"/>
    </cofactor>
</comment>
<comment type="similarity">
    <text evidence="1">Belongs to the PEPCase type 1 family.</text>
</comment>